<name>UBIM_MUSSI</name>
<gene>
    <name type="primary">Fau</name>
</gene>
<comment type="miscellaneous">
    <text>This protein is synthesized with ribosomal S30 as its C-terminal extension.</text>
</comment>
<comment type="similarity">
    <text evidence="1">Belongs to the ubiquitin family.</text>
</comment>
<keyword id="KW-1185">Reference proteome</keyword>
<proteinExistence type="inferred from homology"/>
<organism>
    <name type="scientific">Mus spicilegus</name>
    <name type="common">Steppe mouse</name>
    <dbReference type="NCBI Taxonomy" id="10103"/>
    <lineage>
        <taxon>Eukaryota</taxon>
        <taxon>Metazoa</taxon>
        <taxon>Chordata</taxon>
        <taxon>Craniata</taxon>
        <taxon>Vertebrata</taxon>
        <taxon>Euteleostomi</taxon>
        <taxon>Mammalia</taxon>
        <taxon>Eutheria</taxon>
        <taxon>Euarchontoglires</taxon>
        <taxon>Glires</taxon>
        <taxon>Rodentia</taxon>
        <taxon>Myomorpha</taxon>
        <taxon>Muroidea</taxon>
        <taxon>Muridae</taxon>
        <taxon>Murinae</taxon>
        <taxon>Mus</taxon>
        <taxon>Mus</taxon>
    </lineage>
</organism>
<accession>P62868</accession>
<accession>Q920W7</accession>
<dbReference type="EMBL" id="AB039093">
    <property type="protein sequence ID" value="BAB68617.1"/>
    <property type="status" value="ALT_SEQ"/>
    <property type="molecule type" value="Genomic_DNA"/>
</dbReference>
<dbReference type="SMR" id="P62868"/>
<dbReference type="Proteomes" id="UP000694415">
    <property type="component" value="Unplaced"/>
</dbReference>
<dbReference type="CDD" id="cd01793">
    <property type="entry name" value="Ubl_FUBI"/>
    <property type="match status" value="1"/>
</dbReference>
<dbReference type="FunFam" id="3.10.20.90:FF:000114">
    <property type="entry name" value="40S ribosomal protein S30"/>
    <property type="match status" value="1"/>
</dbReference>
<dbReference type="Gene3D" id="3.10.20.90">
    <property type="entry name" value="Phosphatidylinositol 3-kinase Catalytic Subunit, Chain A, domain 1"/>
    <property type="match status" value="1"/>
</dbReference>
<dbReference type="InterPro" id="IPR039415">
    <property type="entry name" value="FUBI"/>
</dbReference>
<dbReference type="InterPro" id="IPR000626">
    <property type="entry name" value="Ubiquitin-like_dom"/>
</dbReference>
<dbReference type="InterPro" id="IPR029071">
    <property type="entry name" value="Ubiquitin-like_domsf"/>
</dbReference>
<dbReference type="InterPro" id="IPR019954">
    <property type="entry name" value="Ubiquitin_CS"/>
</dbReference>
<dbReference type="InterPro" id="IPR019956">
    <property type="entry name" value="Ubiquitin_dom"/>
</dbReference>
<dbReference type="Pfam" id="PF00240">
    <property type="entry name" value="ubiquitin"/>
    <property type="match status" value="1"/>
</dbReference>
<dbReference type="PRINTS" id="PR00348">
    <property type="entry name" value="UBIQUITIN"/>
</dbReference>
<dbReference type="SMART" id="SM00213">
    <property type="entry name" value="UBQ"/>
    <property type="match status" value="1"/>
</dbReference>
<dbReference type="SUPFAM" id="SSF54236">
    <property type="entry name" value="Ubiquitin-like"/>
    <property type="match status" value="1"/>
</dbReference>
<dbReference type="PROSITE" id="PS00299">
    <property type="entry name" value="UBIQUITIN_1"/>
    <property type="match status" value="1"/>
</dbReference>
<dbReference type="PROSITE" id="PS50053">
    <property type="entry name" value="UBIQUITIN_2"/>
    <property type="match status" value="1"/>
</dbReference>
<evidence type="ECO:0000305" key="1"/>
<reference key="1">
    <citation type="submission" date="2000-02" db="EMBL/GenBank/DDBJ databases">
        <title>Conspicuous differences among gene genealogies of 21 nuclear genes of five Mus musculus subspecies.</title>
        <authorList>
            <person name="Liu Y."/>
            <person name="Kitano T."/>
            <person name="Koide T."/>
            <person name="Shiroishi T."/>
            <person name="Moriwaki K."/>
            <person name="Saitou N."/>
        </authorList>
    </citation>
    <scope>NUCLEOTIDE SEQUENCE [GENOMIC DNA]</scope>
    <source>
        <strain>ZBN</strain>
    </source>
</reference>
<protein>
    <recommendedName>
        <fullName>Ubiquitin-like protein FUBI</fullName>
    </recommendedName>
</protein>
<feature type="chain" id="PRO_0000114884" description="Ubiquitin-like protein FUBI">
    <location>
        <begin position="1"/>
        <end position="74"/>
    </location>
</feature>
<sequence>MQLFVRAQELHTLEVTGQETVAQIKDHVASLEGIAPEDQVVLLAGSPLEDEATLGQCGVEALTTLEVAGRMLGG</sequence>